<evidence type="ECO:0000255" key="1">
    <source>
        <dbReference type="HAMAP-Rule" id="MF_00632"/>
    </source>
</evidence>
<dbReference type="EMBL" id="CP000655">
    <property type="protein sequence ID" value="ABP33511.1"/>
    <property type="molecule type" value="Genomic_DNA"/>
</dbReference>
<dbReference type="RefSeq" id="WP_011902136.1">
    <property type="nucleotide sequence ID" value="NC_009379.1"/>
</dbReference>
<dbReference type="SMR" id="A4SVJ7"/>
<dbReference type="GeneID" id="31480640"/>
<dbReference type="KEGG" id="pnu:Pnuc_0290"/>
<dbReference type="eggNOG" id="COG1666">
    <property type="taxonomic scope" value="Bacteria"/>
</dbReference>
<dbReference type="HOGENOM" id="CLU_099839_1_0_4"/>
<dbReference type="Proteomes" id="UP000000231">
    <property type="component" value="Chromosome"/>
</dbReference>
<dbReference type="GO" id="GO:0005829">
    <property type="term" value="C:cytosol"/>
    <property type="evidence" value="ECO:0007669"/>
    <property type="project" value="TreeGrafter"/>
</dbReference>
<dbReference type="GO" id="GO:0000166">
    <property type="term" value="F:nucleotide binding"/>
    <property type="evidence" value="ECO:0007669"/>
    <property type="project" value="TreeGrafter"/>
</dbReference>
<dbReference type="CDD" id="cd11740">
    <property type="entry name" value="YajQ_like"/>
    <property type="match status" value="1"/>
</dbReference>
<dbReference type="Gene3D" id="3.30.70.860">
    <property type="match status" value="1"/>
</dbReference>
<dbReference type="Gene3D" id="3.30.70.990">
    <property type="entry name" value="YajQ-like, domain 2"/>
    <property type="match status" value="1"/>
</dbReference>
<dbReference type="HAMAP" id="MF_00632">
    <property type="entry name" value="YajQ"/>
    <property type="match status" value="1"/>
</dbReference>
<dbReference type="InterPro" id="IPR007551">
    <property type="entry name" value="DUF520"/>
</dbReference>
<dbReference type="InterPro" id="IPR035571">
    <property type="entry name" value="UPF0234-like_C"/>
</dbReference>
<dbReference type="InterPro" id="IPR035570">
    <property type="entry name" value="UPF0234_N"/>
</dbReference>
<dbReference type="InterPro" id="IPR036183">
    <property type="entry name" value="YajQ-like_sf"/>
</dbReference>
<dbReference type="NCBIfam" id="NF003819">
    <property type="entry name" value="PRK05412.1"/>
    <property type="match status" value="1"/>
</dbReference>
<dbReference type="PANTHER" id="PTHR30476">
    <property type="entry name" value="UPF0234 PROTEIN YAJQ"/>
    <property type="match status" value="1"/>
</dbReference>
<dbReference type="PANTHER" id="PTHR30476:SF0">
    <property type="entry name" value="UPF0234 PROTEIN YAJQ"/>
    <property type="match status" value="1"/>
</dbReference>
<dbReference type="Pfam" id="PF04461">
    <property type="entry name" value="DUF520"/>
    <property type="match status" value="1"/>
</dbReference>
<dbReference type="SUPFAM" id="SSF89963">
    <property type="entry name" value="YajQ-like"/>
    <property type="match status" value="2"/>
</dbReference>
<gene>
    <name type="ordered locus">Pnuc_0290</name>
</gene>
<sequence>MPSFDVVCEPDMVELKNAIEQSNKEISNRFDFKGSDSRVEQKDEALILFGDDDFKLGQVRDVLVNKMAKRNVDVRYLKDDKTETIGGDKRKQTMKIQKGITSELSKKVVRIIKDSKIKVQASIQGDAVRVTGGKRDDLQETMALLKKEVTEAPLGFNNFRD</sequence>
<organism>
    <name type="scientific">Polynucleobacter asymbioticus (strain DSM 18221 / CIP 109841 / QLW-P1DMWA-1)</name>
    <name type="common">Polynucleobacter necessarius subsp. asymbioticus</name>
    <dbReference type="NCBI Taxonomy" id="312153"/>
    <lineage>
        <taxon>Bacteria</taxon>
        <taxon>Pseudomonadati</taxon>
        <taxon>Pseudomonadota</taxon>
        <taxon>Betaproteobacteria</taxon>
        <taxon>Burkholderiales</taxon>
        <taxon>Burkholderiaceae</taxon>
        <taxon>Polynucleobacter</taxon>
    </lineage>
</organism>
<feature type="chain" id="PRO_1000082630" description="Nucleotide-binding protein Pnuc_0290">
    <location>
        <begin position="1"/>
        <end position="161"/>
    </location>
</feature>
<comment type="function">
    <text evidence="1">Nucleotide-binding protein.</text>
</comment>
<comment type="similarity">
    <text evidence="1">Belongs to the YajQ family.</text>
</comment>
<keyword id="KW-0547">Nucleotide-binding</keyword>
<keyword id="KW-1185">Reference proteome</keyword>
<proteinExistence type="inferred from homology"/>
<accession>A4SVJ7</accession>
<reference key="1">
    <citation type="journal article" date="2012" name="Stand. Genomic Sci.">
        <title>Complete genome sequence of Polynucleobacter necessarius subsp. asymbioticus type strain (QLW-P1DMWA-1(T)).</title>
        <authorList>
            <person name="Meincke L."/>
            <person name="Copeland A."/>
            <person name="Lapidus A."/>
            <person name="Lucas S."/>
            <person name="Berry K.W."/>
            <person name="Del Rio T.G."/>
            <person name="Hammon N."/>
            <person name="Dalin E."/>
            <person name="Tice H."/>
            <person name="Pitluck S."/>
            <person name="Richardson P."/>
            <person name="Bruce D."/>
            <person name="Goodwin L."/>
            <person name="Han C."/>
            <person name="Tapia R."/>
            <person name="Detter J.C."/>
            <person name="Schmutz J."/>
            <person name="Brettin T."/>
            <person name="Larimer F."/>
            <person name="Land M."/>
            <person name="Hauser L."/>
            <person name="Kyrpides N.C."/>
            <person name="Ivanova N."/>
            <person name="Goker M."/>
            <person name="Woyke T."/>
            <person name="Wu Q.L."/>
            <person name="Pockl M."/>
            <person name="Hahn M.W."/>
            <person name="Klenk H.P."/>
        </authorList>
    </citation>
    <scope>NUCLEOTIDE SEQUENCE [LARGE SCALE GENOMIC DNA]</scope>
    <source>
        <strain>DSM 18221 / CIP 109841 / QLW-P1DMWA-1</strain>
    </source>
</reference>
<name>Y290_POLAQ</name>
<protein>
    <recommendedName>
        <fullName evidence="1">Nucleotide-binding protein Pnuc_0290</fullName>
    </recommendedName>
</protein>